<name>A2372_ARTBC</name>
<sequence length="500" mass="54539">MHSIIFKAAVALLGVSTAAGFSYQNSRLCLKLLAQGVEVDLPNSTDYETEQQNYWSTACTALRPDCIIAPKNARDMSRAVAAIQESKTTRFAIKSGGHSPNQLFSSIHDGVLISTRNLKQITYNEHTQTAVLGPGLKWEEAVGGLKDKGQTVVGGRLGGIGVGGLILGGGLSFLSGQYGWATNNVVNFEVVLANGTIVNANATSNPDLYAVMKGGSGNFGIVTAFTVKTHTQDPEIWGGSMFFDGNHTESLTRAIRDFAEYNTDDKASIIGTVNRNPSLIWVVFLTYDGPSPPEDVFRNFTQIPNIRNTVKRQSYHSLMLANDEYIRHGNRFSIGAETSVNPSGTHGYDIFKSFIDHWNDVTDDFIDIPGSASSLALQPLPRSISTKAKESGGDVAGFDPRYDYLLLQIAVSWNSSTSDSVIEAATRKYYTVQGDMIKQFTNEGKLPKAYCPLYLNDLNANQDFWGRVAPSTREKALAVRRAVDPTLFFQNRVTGGFRLG</sequence>
<comment type="cofactor">
    <cofactor evidence="6">
        <name>FAD</name>
        <dbReference type="ChEBI" id="CHEBI:57692"/>
    </cofactor>
</comment>
<comment type="subcellular location">
    <subcellularLocation>
        <location evidence="5">Secreted</location>
    </subcellularLocation>
</comment>
<comment type="similarity">
    <text evidence="6">Belongs to the oxygen-dependent FAD-linked oxidoreductase family.</text>
</comment>
<feature type="signal peptide" evidence="2">
    <location>
        <begin position="1"/>
        <end position="20"/>
    </location>
</feature>
<feature type="chain" id="PRO_5003053847" description="Uncharacterized FAD-linked oxidoreductase ARB_02372">
    <location>
        <begin position="21"/>
        <end position="500"/>
    </location>
</feature>
<feature type="domain" description="FAD-binding PCMH-type" evidence="4">
    <location>
        <begin position="60"/>
        <end position="232"/>
    </location>
</feature>
<feature type="modified residue" description="Pros-8alpha-FAD histidine" evidence="1">
    <location>
        <position position="98"/>
    </location>
</feature>
<feature type="glycosylation site" description="N-linked (GlcNAc...) asparagine" evidence="3">
    <location>
        <position position="43"/>
    </location>
</feature>
<feature type="glycosylation site" description="N-linked (GlcNAc...) asparagine" evidence="3">
    <location>
        <position position="194"/>
    </location>
</feature>
<feature type="glycosylation site" description="N-linked (GlcNAc...) asparagine" evidence="3">
    <location>
        <position position="201"/>
    </location>
</feature>
<feature type="glycosylation site" description="N-linked (GlcNAc...) asparagine" evidence="3">
    <location>
        <position position="246"/>
    </location>
</feature>
<feature type="glycosylation site" description="N-linked (GlcNAc...) asparagine" evidence="3">
    <location>
        <position position="299"/>
    </location>
</feature>
<feature type="glycosylation site" description="N-linked (GlcNAc...) asparagine" evidence="3">
    <location>
        <position position="414"/>
    </location>
</feature>
<evidence type="ECO:0000250" key="1">
    <source>
        <dbReference type="UniProtKB" id="P08159"/>
    </source>
</evidence>
<evidence type="ECO:0000255" key="2"/>
<evidence type="ECO:0000255" key="3">
    <source>
        <dbReference type="PROSITE-ProRule" id="PRU00498"/>
    </source>
</evidence>
<evidence type="ECO:0000255" key="4">
    <source>
        <dbReference type="PROSITE-ProRule" id="PRU00718"/>
    </source>
</evidence>
<evidence type="ECO:0000269" key="5">
    <source>
    </source>
</evidence>
<evidence type="ECO:0000305" key="6"/>
<dbReference type="EC" id="1.-.-.-" evidence="6"/>
<dbReference type="EMBL" id="ABSU01000027">
    <property type="protein sequence ID" value="EFE30674.1"/>
    <property type="molecule type" value="Genomic_DNA"/>
</dbReference>
<dbReference type="RefSeq" id="XP_003011314.1">
    <property type="nucleotide sequence ID" value="XM_003011268.1"/>
</dbReference>
<dbReference type="SMR" id="D4B1P2"/>
<dbReference type="GeneID" id="9524215"/>
<dbReference type="KEGG" id="abe:ARB_02372"/>
<dbReference type="eggNOG" id="KOG1231">
    <property type="taxonomic scope" value="Eukaryota"/>
</dbReference>
<dbReference type="HOGENOM" id="CLU_018354_1_0_1"/>
<dbReference type="OMA" id="THPQDHK"/>
<dbReference type="OrthoDB" id="2151789at2759"/>
<dbReference type="Proteomes" id="UP000008866">
    <property type="component" value="Unassembled WGS sequence"/>
</dbReference>
<dbReference type="GO" id="GO:0005576">
    <property type="term" value="C:extracellular region"/>
    <property type="evidence" value="ECO:0007669"/>
    <property type="project" value="UniProtKB-SubCell"/>
</dbReference>
<dbReference type="GO" id="GO:0071949">
    <property type="term" value="F:FAD binding"/>
    <property type="evidence" value="ECO:0007669"/>
    <property type="project" value="InterPro"/>
</dbReference>
<dbReference type="GO" id="GO:0016491">
    <property type="term" value="F:oxidoreductase activity"/>
    <property type="evidence" value="ECO:0007669"/>
    <property type="project" value="UniProtKB-KW"/>
</dbReference>
<dbReference type="Gene3D" id="3.30.465.10">
    <property type="match status" value="1"/>
</dbReference>
<dbReference type="InterPro" id="IPR016166">
    <property type="entry name" value="FAD-bd_PCMH"/>
</dbReference>
<dbReference type="InterPro" id="IPR036318">
    <property type="entry name" value="FAD-bd_PCMH-like_sf"/>
</dbReference>
<dbReference type="InterPro" id="IPR016169">
    <property type="entry name" value="FAD-bd_PCMH_sub2"/>
</dbReference>
<dbReference type="InterPro" id="IPR050416">
    <property type="entry name" value="FAD-linked_Oxidoreductase"/>
</dbReference>
<dbReference type="InterPro" id="IPR006094">
    <property type="entry name" value="Oxid_FAD_bind_N"/>
</dbReference>
<dbReference type="PANTHER" id="PTHR42973">
    <property type="entry name" value="BINDING OXIDOREDUCTASE, PUTATIVE (AFU_ORTHOLOGUE AFUA_1G17690)-RELATED"/>
    <property type="match status" value="1"/>
</dbReference>
<dbReference type="PANTHER" id="PTHR42973:SF13">
    <property type="entry name" value="FAD-BINDING PCMH-TYPE DOMAIN-CONTAINING PROTEIN"/>
    <property type="match status" value="1"/>
</dbReference>
<dbReference type="Pfam" id="PF01565">
    <property type="entry name" value="FAD_binding_4"/>
    <property type="match status" value="1"/>
</dbReference>
<dbReference type="SUPFAM" id="SSF56176">
    <property type="entry name" value="FAD-binding/transporter-associated domain-like"/>
    <property type="match status" value="1"/>
</dbReference>
<dbReference type="PROSITE" id="PS51387">
    <property type="entry name" value="FAD_PCMH"/>
    <property type="match status" value="1"/>
</dbReference>
<protein>
    <recommendedName>
        <fullName evidence="6">Uncharacterized FAD-linked oxidoreductase ARB_02372</fullName>
        <ecNumber evidence="6">1.-.-.-</ecNumber>
    </recommendedName>
</protein>
<accession>D4B1P2</accession>
<organism>
    <name type="scientific">Arthroderma benhamiae (strain ATCC MYA-4681 / CBS 112371)</name>
    <name type="common">Trichophyton mentagrophytes</name>
    <dbReference type="NCBI Taxonomy" id="663331"/>
    <lineage>
        <taxon>Eukaryota</taxon>
        <taxon>Fungi</taxon>
        <taxon>Dikarya</taxon>
        <taxon>Ascomycota</taxon>
        <taxon>Pezizomycotina</taxon>
        <taxon>Eurotiomycetes</taxon>
        <taxon>Eurotiomycetidae</taxon>
        <taxon>Onygenales</taxon>
        <taxon>Arthrodermataceae</taxon>
        <taxon>Trichophyton</taxon>
    </lineage>
</organism>
<reference key="1">
    <citation type="journal article" date="2011" name="Genome Biol.">
        <title>Comparative and functional genomics provide insights into the pathogenicity of dermatophytic fungi.</title>
        <authorList>
            <person name="Burmester A."/>
            <person name="Shelest E."/>
            <person name="Gloeckner G."/>
            <person name="Heddergott C."/>
            <person name="Schindler S."/>
            <person name="Staib P."/>
            <person name="Heidel A."/>
            <person name="Felder M."/>
            <person name="Petzold A."/>
            <person name="Szafranski K."/>
            <person name="Feuermann M."/>
            <person name="Pedruzzi I."/>
            <person name="Priebe S."/>
            <person name="Groth M."/>
            <person name="Winkler R."/>
            <person name="Li W."/>
            <person name="Kniemeyer O."/>
            <person name="Schroeckh V."/>
            <person name="Hertweck C."/>
            <person name="Hube B."/>
            <person name="White T.C."/>
            <person name="Platzer M."/>
            <person name="Guthke R."/>
            <person name="Heitman J."/>
            <person name="Woestemeyer J."/>
            <person name="Zipfel P.F."/>
            <person name="Monod M."/>
            <person name="Brakhage A.A."/>
        </authorList>
    </citation>
    <scope>NUCLEOTIDE SEQUENCE [LARGE SCALE GENOMIC DNA]</scope>
    <source>
        <strain>ATCC MYA-4681 / CBS 112371</strain>
    </source>
</reference>
<reference key="2">
    <citation type="journal article" date="2011" name="Proteomics">
        <title>Identification of novel secreted proteases during extracellular proteolysis by dermatophytes at acidic pH.</title>
        <authorList>
            <person name="Sriranganadane D."/>
            <person name="Waridel P."/>
            <person name="Salamin K."/>
            <person name="Feuermann M."/>
            <person name="Mignon B."/>
            <person name="Staib P."/>
            <person name="Neuhaus J.M."/>
            <person name="Quadroni M."/>
            <person name="Monod M."/>
        </authorList>
    </citation>
    <scope>IDENTIFICATION BY MASS SPECTROMETRY</scope>
    <scope>SUBCELLULAR LOCATION</scope>
</reference>
<gene>
    <name type="ORF">ARB_02372</name>
</gene>
<keyword id="KW-0274">FAD</keyword>
<keyword id="KW-0285">Flavoprotein</keyword>
<keyword id="KW-0325">Glycoprotein</keyword>
<keyword id="KW-0560">Oxidoreductase</keyword>
<keyword id="KW-1185">Reference proteome</keyword>
<keyword id="KW-0964">Secreted</keyword>
<keyword id="KW-0732">Signal</keyword>
<proteinExistence type="evidence at protein level"/>